<feature type="chain" id="PRO_0000302680" description="ATP synthase subunit alpha">
    <location>
        <begin position="1"/>
        <end position="525"/>
    </location>
</feature>
<feature type="binding site" evidence="1">
    <location>
        <begin position="172"/>
        <end position="179"/>
    </location>
    <ligand>
        <name>ATP</name>
        <dbReference type="ChEBI" id="CHEBI:30616"/>
    </ligand>
</feature>
<feature type="site" description="Required for activity" evidence="1">
    <location>
        <position position="388"/>
    </location>
</feature>
<name>ATPA_PARD8</name>
<sequence length="525" mass="57399">MTEQIKVSEVSSILRQQLEGIHTSIKLEEVGTVLQVSDGVARIYGLDNAEANELLQFDNGMEAIVMNLEEDNVGAVLLGPTDQIKEGDTVKRTGRIASIDVSEGMIGRVIDPLGNPIDGKGEILGETCEMPLERKAPGVIFRQPVNEPLQTGIKAVDAMIPIGRGQRELIIGDRQTGKTSIAIDTIINQRSNYEAGNPVYCIYVAIGQKGSTVAALVNTLQEKGAMDYTIVVSATASDPAAMQYFAPFAGAAIGEYFRDSGRHALVVYDDLSKQAVAYREVSLILRRPSGREAYPGDIFYLHSRLLERAAKIINQPEVAREMNDLPESMRDKVKGGGSLTALPIIETQAGDVSAYIPTNVISITDGQIFLETDLFNQGNRPAINVGISVSRVGGNAQLKAMKKVAGTLKIDQAQFRELESFSKFGGEMDAVTAFTIDKGQKNTQLLIQPQYSPMPVEEQISILYCGTQGLLKEVPLDKVHEFEARFLQELRTSHQRDVLDVLKTGVINDEIRGILEKTAKELWVH</sequence>
<protein>
    <recommendedName>
        <fullName evidence="1">ATP synthase subunit alpha</fullName>
        <ecNumber evidence="1">7.1.2.2</ecNumber>
    </recommendedName>
    <alternativeName>
        <fullName evidence="1">ATP synthase F1 sector subunit alpha</fullName>
    </alternativeName>
    <alternativeName>
        <fullName evidence="1">F-ATPase subunit alpha</fullName>
    </alternativeName>
</protein>
<gene>
    <name evidence="1" type="primary">atpA</name>
    <name type="ordered locus">BDI_0264</name>
</gene>
<accession>A6L8N5</accession>
<organism>
    <name type="scientific">Parabacteroides distasonis (strain ATCC 8503 / DSM 20701 / CIP 104284 / JCM 5825 / NCTC 11152)</name>
    <dbReference type="NCBI Taxonomy" id="435591"/>
    <lineage>
        <taxon>Bacteria</taxon>
        <taxon>Pseudomonadati</taxon>
        <taxon>Bacteroidota</taxon>
        <taxon>Bacteroidia</taxon>
        <taxon>Bacteroidales</taxon>
        <taxon>Tannerellaceae</taxon>
        <taxon>Parabacteroides</taxon>
    </lineage>
</organism>
<evidence type="ECO:0000255" key="1">
    <source>
        <dbReference type="HAMAP-Rule" id="MF_01346"/>
    </source>
</evidence>
<reference key="1">
    <citation type="journal article" date="2007" name="PLoS Biol.">
        <title>Evolution of symbiotic bacteria in the distal human intestine.</title>
        <authorList>
            <person name="Xu J."/>
            <person name="Mahowald M.A."/>
            <person name="Ley R.E."/>
            <person name="Lozupone C.A."/>
            <person name="Hamady M."/>
            <person name="Martens E.C."/>
            <person name="Henrissat B."/>
            <person name="Coutinho P.M."/>
            <person name="Minx P."/>
            <person name="Latreille P."/>
            <person name="Cordum H."/>
            <person name="Van Brunt A."/>
            <person name="Kim K."/>
            <person name="Fulton R.S."/>
            <person name="Fulton L.A."/>
            <person name="Clifton S.W."/>
            <person name="Wilson R.K."/>
            <person name="Knight R.D."/>
            <person name="Gordon J.I."/>
        </authorList>
    </citation>
    <scope>NUCLEOTIDE SEQUENCE [LARGE SCALE GENOMIC DNA]</scope>
    <source>
        <strain>ATCC 8503 / DSM 20701 / CIP 104284 / JCM 5825 / NCTC 11152</strain>
    </source>
</reference>
<proteinExistence type="inferred from homology"/>
<dbReference type="EC" id="7.1.2.2" evidence="1"/>
<dbReference type="EMBL" id="CP000140">
    <property type="protein sequence ID" value="ABR42049.1"/>
    <property type="molecule type" value="Genomic_DNA"/>
</dbReference>
<dbReference type="RefSeq" id="WP_005861786.1">
    <property type="nucleotide sequence ID" value="NC_009615.1"/>
</dbReference>
<dbReference type="SMR" id="A6L8N5"/>
<dbReference type="STRING" id="435591.BDI_0264"/>
<dbReference type="PaxDb" id="435591-BDI_0264"/>
<dbReference type="GeneID" id="93524425"/>
<dbReference type="KEGG" id="pdi:BDI_0264"/>
<dbReference type="eggNOG" id="COG0056">
    <property type="taxonomic scope" value="Bacteria"/>
</dbReference>
<dbReference type="HOGENOM" id="CLU_010091_2_1_10"/>
<dbReference type="BioCyc" id="PDIS435591:G1G5A-270-MONOMER"/>
<dbReference type="Proteomes" id="UP000000566">
    <property type="component" value="Chromosome"/>
</dbReference>
<dbReference type="GO" id="GO:0005886">
    <property type="term" value="C:plasma membrane"/>
    <property type="evidence" value="ECO:0007669"/>
    <property type="project" value="UniProtKB-SubCell"/>
</dbReference>
<dbReference type="GO" id="GO:0045259">
    <property type="term" value="C:proton-transporting ATP synthase complex"/>
    <property type="evidence" value="ECO:0007669"/>
    <property type="project" value="UniProtKB-KW"/>
</dbReference>
<dbReference type="GO" id="GO:0043531">
    <property type="term" value="F:ADP binding"/>
    <property type="evidence" value="ECO:0007669"/>
    <property type="project" value="TreeGrafter"/>
</dbReference>
<dbReference type="GO" id="GO:0005524">
    <property type="term" value="F:ATP binding"/>
    <property type="evidence" value="ECO:0007669"/>
    <property type="project" value="UniProtKB-UniRule"/>
</dbReference>
<dbReference type="GO" id="GO:0046933">
    <property type="term" value="F:proton-transporting ATP synthase activity, rotational mechanism"/>
    <property type="evidence" value="ECO:0007669"/>
    <property type="project" value="UniProtKB-UniRule"/>
</dbReference>
<dbReference type="CDD" id="cd18113">
    <property type="entry name" value="ATP-synt_F1_alpha_C"/>
    <property type="match status" value="1"/>
</dbReference>
<dbReference type="CDD" id="cd18116">
    <property type="entry name" value="ATP-synt_F1_alpha_N"/>
    <property type="match status" value="1"/>
</dbReference>
<dbReference type="CDD" id="cd01132">
    <property type="entry name" value="F1-ATPase_alpha_CD"/>
    <property type="match status" value="1"/>
</dbReference>
<dbReference type="FunFam" id="1.20.150.20:FF:000001">
    <property type="entry name" value="ATP synthase subunit alpha"/>
    <property type="match status" value="1"/>
</dbReference>
<dbReference type="FunFam" id="2.40.30.20:FF:000001">
    <property type="entry name" value="ATP synthase subunit alpha"/>
    <property type="match status" value="1"/>
</dbReference>
<dbReference type="FunFam" id="3.40.50.300:FF:000002">
    <property type="entry name" value="ATP synthase subunit alpha"/>
    <property type="match status" value="1"/>
</dbReference>
<dbReference type="Gene3D" id="2.40.30.20">
    <property type="match status" value="1"/>
</dbReference>
<dbReference type="Gene3D" id="1.20.150.20">
    <property type="entry name" value="ATP synthase alpha/beta chain, C-terminal domain"/>
    <property type="match status" value="1"/>
</dbReference>
<dbReference type="Gene3D" id="3.40.50.300">
    <property type="entry name" value="P-loop containing nucleotide triphosphate hydrolases"/>
    <property type="match status" value="1"/>
</dbReference>
<dbReference type="HAMAP" id="MF_01346">
    <property type="entry name" value="ATP_synth_alpha_bact"/>
    <property type="match status" value="1"/>
</dbReference>
<dbReference type="InterPro" id="IPR023366">
    <property type="entry name" value="ATP_synth_asu-like_sf"/>
</dbReference>
<dbReference type="InterPro" id="IPR000793">
    <property type="entry name" value="ATP_synth_asu_C"/>
</dbReference>
<dbReference type="InterPro" id="IPR038376">
    <property type="entry name" value="ATP_synth_asu_C_sf"/>
</dbReference>
<dbReference type="InterPro" id="IPR033732">
    <property type="entry name" value="ATP_synth_F1_a_nt-bd_dom"/>
</dbReference>
<dbReference type="InterPro" id="IPR005294">
    <property type="entry name" value="ATP_synth_F1_asu"/>
</dbReference>
<dbReference type="InterPro" id="IPR020003">
    <property type="entry name" value="ATPase_a/bsu_AS"/>
</dbReference>
<dbReference type="InterPro" id="IPR004100">
    <property type="entry name" value="ATPase_F1/V1/A1_a/bsu_N"/>
</dbReference>
<dbReference type="InterPro" id="IPR036121">
    <property type="entry name" value="ATPase_F1/V1/A1_a/bsu_N_sf"/>
</dbReference>
<dbReference type="InterPro" id="IPR000194">
    <property type="entry name" value="ATPase_F1/V1/A1_a/bsu_nucl-bd"/>
</dbReference>
<dbReference type="InterPro" id="IPR027417">
    <property type="entry name" value="P-loop_NTPase"/>
</dbReference>
<dbReference type="NCBIfam" id="TIGR00962">
    <property type="entry name" value="atpA"/>
    <property type="match status" value="1"/>
</dbReference>
<dbReference type="NCBIfam" id="NF009884">
    <property type="entry name" value="PRK13343.1"/>
    <property type="match status" value="1"/>
</dbReference>
<dbReference type="PANTHER" id="PTHR48082">
    <property type="entry name" value="ATP SYNTHASE SUBUNIT ALPHA, MITOCHONDRIAL"/>
    <property type="match status" value="1"/>
</dbReference>
<dbReference type="PANTHER" id="PTHR48082:SF2">
    <property type="entry name" value="ATP SYNTHASE SUBUNIT ALPHA, MITOCHONDRIAL"/>
    <property type="match status" value="1"/>
</dbReference>
<dbReference type="Pfam" id="PF00006">
    <property type="entry name" value="ATP-synt_ab"/>
    <property type="match status" value="1"/>
</dbReference>
<dbReference type="Pfam" id="PF00306">
    <property type="entry name" value="ATP-synt_ab_C"/>
    <property type="match status" value="1"/>
</dbReference>
<dbReference type="Pfam" id="PF02874">
    <property type="entry name" value="ATP-synt_ab_N"/>
    <property type="match status" value="1"/>
</dbReference>
<dbReference type="PIRSF" id="PIRSF039088">
    <property type="entry name" value="F_ATPase_subunit_alpha"/>
    <property type="match status" value="1"/>
</dbReference>
<dbReference type="SUPFAM" id="SSF47917">
    <property type="entry name" value="C-terminal domain of alpha and beta subunits of F1 ATP synthase"/>
    <property type="match status" value="1"/>
</dbReference>
<dbReference type="SUPFAM" id="SSF50615">
    <property type="entry name" value="N-terminal domain of alpha and beta subunits of F1 ATP synthase"/>
    <property type="match status" value="1"/>
</dbReference>
<dbReference type="SUPFAM" id="SSF52540">
    <property type="entry name" value="P-loop containing nucleoside triphosphate hydrolases"/>
    <property type="match status" value="1"/>
</dbReference>
<dbReference type="PROSITE" id="PS00152">
    <property type="entry name" value="ATPASE_ALPHA_BETA"/>
    <property type="match status" value="1"/>
</dbReference>
<comment type="function">
    <text evidence="1">Produces ATP from ADP in the presence of a proton gradient across the membrane. The alpha chain is a regulatory subunit.</text>
</comment>
<comment type="catalytic activity">
    <reaction evidence="1">
        <text>ATP + H2O + 4 H(+)(in) = ADP + phosphate + 5 H(+)(out)</text>
        <dbReference type="Rhea" id="RHEA:57720"/>
        <dbReference type="ChEBI" id="CHEBI:15377"/>
        <dbReference type="ChEBI" id="CHEBI:15378"/>
        <dbReference type="ChEBI" id="CHEBI:30616"/>
        <dbReference type="ChEBI" id="CHEBI:43474"/>
        <dbReference type="ChEBI" id="CHEBI:456216"/>
        <dbReference type="EC" id="7.1.2.2"/>
    </reaction>
</comment>
<comment type="subunit">
    <text evidence="1">F-type ATPases have 2 components, CF(1) - the catalytic core - and CF(0) - the membrane proton channel. CF(1) has five subunits: alpha(3), beta(3), gamma(1), delta(1), epsilon(1). CF(0) has three main subunits: a(1), b(2) and c(9-12). The alpha and beta chains form an alternating ring which encloses part of the gamma chain. CF(1) is attached to CF(0) by a central stalk formed by the gamma and epsilon chains, while a peripheral stalk is formed by the delta and b chains.</text>
</comment>
<comment type="subcellular location">
    <subcellularLocation>
        <location evidence="1">Cell inner membrane</location>
        <topology evidence="1">Peripheral membrane protein</topology>
    </subcellularLocation>
</comment>
<comment type="similarity">
    <text evidence="1">Belongs to the ATPase alpha/beta chains family.</text>
</comment>
<keyword id="KW-0066">ATP synthesis</keyword>
<keyword id="KW-0067">ATP-binding</keyword>
<keyword id="KW-0997">Cell inner membrane</keyword>
<keyword id="KW-1003">Cell membrane</keyword>
<keyword id="KW-0139">CF(1)</keyword>
<keyword id="KW-0375">Hydrogen ion transport</keyword>
<keyword id="KW-0406">Ion transport</keyword>
<keyword id="KW-0472">Membrane</keyword>
<keyword id="KW-0547">Nucleotide-binding</keyword>
<keyword id="KW-1185">Reference proteome</keyword>
<keyword id="KW-1278">Translocase</keyword>
<keyword id="KW-0813">Transport</keyword>